<gene>
    <name evidence="1" type="primary">cheB</name>
    <name type="ordered locus">RSp1403</name>
    <name type="ORF">RS02055</name>
</gene>
<feature type="chain" id="PRO_0000158017" description="Protein-glutamate methylesterase/protein-glutamine glutaminase">
    <location>
        <begin position="1"/>
        <end position="381"/>
    </location>
</feature>
<feature type="domain" description="Response regulatory" evidence="1">
    <location>
        <begin position="8"/>
        <end position="125"/>
    </location>
</feature>
<feature type="domain" description="CheB-type methylesterase" evidence="1">
    <location>
        <begin position="183"/>
        <end position="375"/>
    </location>
</feature>
<feature type="active site" evidence="1">
    <location>
        <position position="195"/>
    </location>
</feature>
<feature type="active site" evidence="1">
    <location>
        <position position="221"/>
    </location>
</feature>
<feature type="active site" evidence="1">
    <location>
        <position position="317"/>
    </location>
</feature>
<feature type="modified residue" description="4-aspartylphosphate" evidence="1">
    <location>
        <position position="59"/>
    </location>
</feature>
<proteinExistence type="inferred from homology"/>
<evidence type="ECO:0000255" key="1">
    <source>
        <dbReference type="HAMAP-Rule" id="MF_00099"/>
    </source>
</evidence>
<sequence>MNEKRKIQVLCIDDSALIRSILKEIINAQPDMEVVGVAPDPIIARDLIKQTNPDVLTLDVEMPKMDGLDFLEKLMRLRPTPVVMISSLTERGSEATLRALELGAVDFVAKPKLGMRDGMNEYADQIADKIRAAARARLRPRTASPAPAPAAASPAHAVHTAHAVHARPEHDAAAVPAPARTHFSSTEKLIIVGASTGGTEAIKDFLLEMPPDCPGILIVQHMPAGFTTSFAKRLDGLCRIRVKEAVHGERVLPGHAYIAPGDMHLSLGRSGANYVTELDQNPPVNRHRPAVDVLFRSAARNAGANALGVILTGMGKDGAAGMLEMRNAGAYNVAQDEASCVVYGMPKEAVAHGGVHEILPLHQIGPHVLARLSAHGRVTRV</sequence>
<geneLocation type="plasmid">
    <name>megaplasmid Rsp</name>
</geneLocation>
<keyword id="KW-0145">Chemotaxis</keyword>
<keyword id="KW-0963">Cytoplasm</keyword>
<keyword id="KW-0378">Hydrolase</keyword>
<keyword id="KW-0597">Phosphoprotein</keyword>
<keyword id="KW-0614">Plasmid</keyword>
<keyword id="KW-1185">Reference proteome</keyword>
<comment type="function">
    <text evidence="1">Involved in chemotaxis. Part of a chemotaxis signal transduction system that modulates chemotaxis in response to various stimuli. Catalyzes the demethylation of specific methylglutamate residues introduced into the chemoreceptors (methyl-accepting chemotaxis proteins or MCP) by CheR. Also mediates the irreversible deamidation of specific glutamine residues to glutamic acid.</text>
</comment>
<comment type="catalytic activity">
    <reaction evidence="1">
        <text>[protein]-L-glutamate 5-O-methyl ester + H2O = L-glutamyl-[protein] + methanol + H(+)</text>
        <dbReference type="Rhea" id="RHEA:23236"/>
        <dbReference type="Rhea" id="RHEA-COMP:10208"/>
        <dbReference type="Rhea" id="RHEA-COMP:10311"/>
        <dbReference type="ChEBI" id="CHEBI:15377"/>
        <dbReference type="ChEBI" id="CHEBI:15378"/>
        <dbReference type="ChEBI" id="CHEBI:17790"/>
        <dbReference type="ChEBI" id="CHEBI:29973"/>
        <dbReference type="ChEBI" id="CHEBI:82795"/>
        <dbReference type="EC" id="3.1.1.61"/>
    </reaction>
</comment>
<comment type="catalytic activity">
    <reaction evidence="1">
        <text>L-glutaminyl-[protein] + H2O = L-glutamyl-[protein] + NH4(+)</text>
        <dbReference type="Rhea" id="RHEA:16441"/>
        <dbReference type="Rhea" id="RHEA-COMP:10207"/>
        <dbReference type="Rhea" id="RHEA-COMP:10208"/>
        <dbReference type="ChEBI" id="CHEBI:15377"/>
        <dbReference type="ChEBI" id="CHEBI:28938"/>
        <dbReference type="ChEBI" id="CHEBI:29973"/>
        <dbReference type="ChEBI" id="CHEBI:30011"/>
        <dbReference type="EC" id="3.5.1.44"/>
    </reaction>
</comment>
<comment type="subcellular location">
    <subcellularLocation>
        <location evidence="1">Cytoplasm</location>
    </subcellularLocation>
</comment>
<comment type="domain">
    <text evidence="1">Contains a C-terminal catalytic domain, and an N-terminal region which modulates catalytic activity.</text>
</comment>
<comment type="PTM">
    <text evidence="1">Phosphorylated by CheA. Phosphorylation of the N-terminal regulatory domain activates the methylesterase activity.</text>
</comment>
<comment type="similarity">
    <text evidence="1">Belongs to the CheB family.</text>
</comment>
<protein>
    <recommendedName>
        <fullName evidence="1">Protein-glutamate methylesterase/protein-glutamine glutaminase</fullName>
        <ecNumber evidence="1">3.1.1.61</ecNumber>
        <ecNumber evidence="1">3.5.1.44</ecNumber>
    </recommendedName>
</protein>
<dbReference type="EC" id="3.1.1.61" evidence="1"/>
<dbReference type="EC" id="3.5.1.44" evidence="1"/>
<dbReference type="EMBL" id="AL646053">
    <property type="protein sequence ID" value="CAD18554.1"/>
    <property type="molecule type" value="Genomic_DNA"/>
</dbReference>
<dbReference type="RefSeq" id="WP_011004653.1">
    <property type="nucleotide sequence ID" value="NC_003296.1"/>
</dbReference>
<dbReference type="SMR" id="Q8XQ83"/>
<dbReference type="STRING" id="267608.RSp1403"/>
<dbReference type="EnsemblBacteria" id="CAD18554">
    <property type="protein sequence ID" value="CAD18554"/>
    <property type="gene ID" value="RSp1403"/>
</dbReference>
<dbReference type="KEGG" id="rso:RSp1403"/>
<dbReference type="PATRIC" id="fig|267608.8.peg.4882"/>
<dbReference type="eggNOG" id="COG2201">
    <property type="taxonomic scope" value="Bacteria"/>
</dbReference>
<dbReference type="HOGENOM" id="CLU_000445_51_0_4"/>
<dbReference type="Proteomes" id="UP000001436">
    <property type="component" value="Plasmid megaplasmid Rsp"/>
</dbReference>
<dbReference type="GO" id="GO:0005737">
    <property type="term" value="C:cytoplasm"/>
    <property type="evidence" value="ECO:0007669"/>
    <property type="project" value="UniProtKB-SubCell"/>
</dbReference>
<dbReference type="GO" id="GO:0000156">
    <property type="term" value="F:phosphorelay response regulator activity"/>
    <property type="evidence" value="ECO:0007669"/>
    <property type="project" value="InterPro"/>
</dbReference>
<dbReference type="GO" id="GO:0008984">
    <property type="term" value="F:protein-glutamate methylesterase activity"/>
    <property type="evidence" value="ECO:0007669"/>
    <property type="project" value="UniProtKB-UniRule"/>
</dbReference>
<dbReference type="GO" id="GO:0050568">
    <property type="term" value="F:protein-glutamine glutaminase activity"/>
    <property type="evidence" value="ECO:0007669"/>
    <property type="project" value="UniProtKB-UniRule"/>
</dbReference>
<dbReference type="GO" id="GO:0006935">
    <property type="term" value="P:chemotaxis"/>
    <property type="evidence" value="ECO:0007669"/>
    <property type="project" value="UniProtKB-UniRule"/>
</dbReference>
<dbReference type="CDD" id="cd16432">
    <property type="entry name" value="CheB_Rec"/>
    <property type="match status" value="1"/>
</dbReference>
<dbReference type="CDD" id="cd17541">
    <property type="entry name" value="REC_CheB-like"/>
    <property type="match status" value="1"/>
</dbReference>
<dbReference type="FunFam" id="3.40.50.2300:FF:000060">
    <property type="entry name" value="Protein-glutamate methylesterase/protein-glutamine glutaminase"/>
    <property type="match status" value="1"/>
</dbReference>
<dbReference type="Gene3D" id="3.40.50.2300">
    <property type="match status" value="1"/>
</dbReference>
<dbReference type="Gene3D" id="3.40.50.180">
    <property type="entry name" value="Methylesterase CheB, C-terminal domain"/>
    <property type="match status" value="1"/>
</dbReference>
<dbReference type="HAMAP" id="MF_00099">
    <property type="entry name" value="CheB_chemtxs"/>
    <property type="match status" value="1"/>
</dbReference>
<dbReference type="InterPro" id="IPR008248">
    <property type="entry name" value="CheB-like"/>
</dbReference>
<dbReference type="InterPro" id="IPR035909">
    <property type="entry name" value="CheB_C"/>
</dbReference>
<dbReference type="InterPro" id="IPR011006">
    <property type="entry name" value="CheY-like_superfamily"/>
</dbReference>
<dbReference type="InterPro" id="IPR000673">
    <property type="entry name" value="Sig_transdc_resp-reg_Me-estase"/>
</dbReference>
<dbReference type="InterPro" id="IPR001789">
    <property type="entry name" value="Sig_transdc_resp-reg_receiver"/>
</dbReference>
<dbReference type="NCBIfam" id="NF001965">
    <property type="entry name" value="PRK00742.1"/>
    <property type="match status" value="1"/>
</dbReference>
<dbReference type="NCBIfam" id="NF009206">
    <property type="entry name" value="PRK12555.1"/>
    <property type="match status" value="1"/>
</dbReference>
<dbReference type="PANTHER" id="PTHR42872">
    <property type="entry name" value="PROTEIN-GLUTAMATE METHYLESTERASE/PROTEIN-GLUTAMINE GLUTAMINASE"/>
    <property type="match status" value="1"/>
</dbReference>
<dbReference type="PANTHER" id="PTHR42872:SF6">
    <property type="entry name" value="PROTEIN-GLUTAMATE METHYLESTERASE_PROTEIN-GLUTAMINE GLUTAMINASE"/>
    <property type="match status" value="1"/>
</dbReference>
<dbReference type="Pfam" id="PF01339">
    <property type="entry name" value="CheB_methylest"/>
    <property type="match status" value="1"/>
</dbReference>
<dbReference type="Pfam" id="PF00072">
    <property type="entry name" value="Response_reg"/>
    <property type="match status" value="1"/>
</dbReference>
<dbReference type="PIRSF" id="PIRSF000876">
    <property type="entry name" value="RR_chemtxs_CheB"/>
    <property type="match status" value="1"/>
</dbReference>
<dbReference type="SMART" id="SM00448">
    <property type="entry name" value="REC"/>
    <property type="match status" value="1"/>
</dbReference>
<dbReference type="SUPFAM" id="SSF52172">
    <property type="entry name" value="CheY-like"/>
    <property type="match status" value="1"/>
</dbReference>
<dbReference type="SUPFAM" id="SSF52738">
    <property type="entry name" value="Methylesterase CheB, C-terminal domain"/>
    <property type="match status" value="1"/>
</dbReference>
<dbReference type="PROSITE" id="PS50122">
    <property type="entry name" value="CHEB"/>
    <property type="match status" value="1"/>
</dbReference>
<dbReference type="PROSITE" id="PS50110">
    <property type="entry name" value="RESPONSE_REGULATORY"/>
    <property type="match status" value="1"/>
</dbReference>
<organism>
    <name type="scientific">Ralstonia nicotianae (strain ATCC BAA-1114 / GMI1000)</name>
    <name type="common">Ralstonia solanacearum</name>
    <dbReference type="NCBI Taxonomy" id="267608"/>
    <lineage>
        <taxon>Bacteria</taxon>
        <taxon>Pseudomonadati</taxon>
        <taxon>Pseudomonadota</taxon>
        <taxon>Betaproteobacteria</taxon>
        <taxon>Burkholderiales</taxon>
        <taxon>Burkholderiaceae</taxon>
        <taxon>Ralstonia</taxon>
        <taxon>Ralstonia solanacearum species complex</taxon>
    </lineage>
</organism>
<reference key="1">
    <citation type="journal article" date="2002" name="Nature">
        <title>Genome sequence of the plant pathogen Ralstonia solanacearum.</title>
        <authorList>
            <person name="Salanoubat M."/>
            <person name="Genin S."/>
            <person name="Artiguenave F."/>
            <person name="Gouzy J."/>
            <person name="Mangenot S."/>
            <person name="Arlat M."/>
            <person name="Billault A."/>
            <person name="Brottier P."/>
            <person name="Camus J.-C."/>
            <person name="Cattolico L."/>
            <person name="Chandler M."/>
            <person name="Choisne N."/>
            <person name="Claudel-Renard C."/>
            <person name="Cunnac S."/>
            <person name="Demange N."/>
            <person name="Gaspin C."/>
            <person name="Lavie M."/>
            <person name="Moisan A."/>
            <person name="Robert C."/>
            <person name="Saurin W."/>
            <person name="Schiex T."/>
            <person name="Siguier P."/>
            <person name="Thebault P."/>
            <person name="Whalen M."/>
            <person name="Wincker P."/>
            <person name="Levy M."/>
            <person name="Weissenbach J."/>
            <person name="Boucher C.A."/>
        </authorList>
    </citation>
    <scope>NUCLEOTIDE SEQUENCE [LARGE SCALE GENOMIC DNA]</scope>
    <source>
        <strain>ATCC BAA-1114 / GMI1000</strain>
    </source>
</reference>
<accession>Q8XQ83</accession>
<name>CHEB_RALN1</name>